<feature type="chain" id="PRO_0000145494" description="Glyceraldehyde-3-phosphate dehydrogenase">
    <location>
        <begin position="1"/>
        <end position="333"/>
    </location>
</feature>
<feature type="region of interest" description="Interaction with WARS1" evidence="1">
    <location>
        <begin position="1"/>
        <end position="146"/>
    </location>
</feature>
<feature type="short sequence motif" description="[IL]-x-C-x-x-[DE] motif" evidence="1">
    <location>
        <begin position="243"/>
        <end position="248"/>
    </location>
</feature>
<feature type="active site" description="Nucleophile" evidence="5 14">
    <location>
        <position position="150"/>
    </location>
</feature>
<feature type="binding site" evidence="1">
    <location>
        <begin position="11"/>
        <end position="12"/>
    </location>
    <ligand>
        <name>NAD(+)</name>
        <dbReference type="ChEBI" id="CHEBI:57540"/>
    </ligand>
</feature>
<feature type="binding site" evidence="1">
    <location>
        <position position="33"/>
    </location>
    <ligand>
        <name>NAD(+)</name>
        <dbReference type="ChEBI" id="CHEBI:57540"/>
    </ligand>
</feature>
<feature type="binding site" evidence="1">
    <location>
        <position position="78"/>
    </location>
    <ligand>
        <name>NAD(+)</name>
        <dbReference type="ChEBI" id="CHEBI:57540"/>
    </ligand>
</feature>
<feature type="binding site" evidence="1">
    <location>
        <position position="120"/>
    </location>
    <ligand>
        <name>NAD(+)</name>
        <dbReference type="ChEBI" id="CHEBI:57540"/>
    </ligand>
</feature>
<feature type="binding site" evidence="4">
    <location>
        <begin position="149"/>
        <end position="151"/>
    </location>
    <ligand>
        <name>D-glyceraldehyde 3-phosphate</name>
        <dbReference type="ChEBI" id="CHEBI:59776"/>
    </ligand>
</feature>
<feature type="binding site" evidence="4">
    <location>
        <position position="180"/>
    </location>
    <ligand>
        <name>D-glyceraldehyde 3-phosphate</name>
        <dbReference type="ChEBI" id="CHEBI:59776"/>
    </ligand>
</feature>
<feature type="binding site" evidence="4">
    <location>
        <begin position="209"/>
        <end position="210"/>
    </location>
    <ligand>
        <name>D-glyceraldehyde 3-phosphate</name>
        <dbReference type="ChEBI" id="CHEBI:59776"/>
    </ligand>
</feature>
<feature type="binding site" evidence="4">
    <location>
        <position position="232"/>
    </location>
    <ligand>
        <name>D-glyceraldehyde 3-phosphate</name>
        <dbReference type="ChEBI" id="CHEBI:59776"/>
    </ligand>
</feature>
<feature type="binding site" evidence="1">
    <location>
        <position position="314"/>
    </location>
    <ligand>
        <name>NAD(+)</name>
        <dbReference type="ChEBI" id="CHEBI:57540"/>
    </ligand>
</feature>
<feature type="site" description="Not nitrosylated" evidence="14">
    <location>
        <position position="154"/>
    </location>
</feature>
<feature type="site" description="Activates thiol group during catalysis" evidence="1">
    <location>
        <position position="177"/>
    </location>
</feature>
<feature type="modified residue" description="N6,N6-dimethyllysine" evidence="1">
    <location>
        <position position="3"/>
    </location>
</feature>
<feature type="modified residue" description="Deamidated asparagine" evidence="1">
    <location>
        <position position="7"/>
    </location>
</feature>
<feature type="modified residue" description="Phosphotyrosine" evidence="1">
    <location>
        <position position="40"/>
    </location>
</feature>
<feature type="modified residue" description="N6-acetyllysine" evidence="1">
    <location>
        <position position="59"/>
    </location>
</feature>
<feature type="modified residue" description="Deamidated asparagine" evidence="1">
    <location>
        <position position="62"/>
    </location>
</feature>
<feature type="modified residue" description="N6,N6-dimethyllysine" evidence="1">
    <location>
        <position position="64"/>
    </location>
</feature>
<feature type="modified residue" description="Deamidated asparagine" evidence="1">
    <location>
        <position position="68"/>
    </location>
</feature>
<feature type="modified residue" description="Phosphothreonine" evidence="1">
    <location>
        <position position="73"/>
    </location>
</feature>
<feature type="modified residue" description="Phosphoserine" evidence="1">
    <location>
        <position position="120"/>
    </location>
</feature>
<feature type="modified residue" description="Phosphoserine" evidence="1">
    <location>
        <position position="146"/>
    </location>
</feature>
<feature type="modified residue" description="Deamidated asparagine" evidence="1">
    <location>
        <position position="147"/>
    </location>
</feature>
<feature type="modified residue" description="Phosphoserine" evidence="1">
    <location>
        <position position="149"/>
    </location>
</feature>
<feature type="modified residue" description="ADP-ribosylcysteine; by autocatalysis; in irreversibly inhibited form" evidence="14">
    <location>
        <position position="150"/>
    </location>
</feature>
<feature type="modified residue" description="Cysteine persulfide" evidence="3">
    <location>
        <position position="150"/>
    </location>
</feature>
<feature type="modified residue" description="S-(2-succinyl)cysteine" evidence="10">
    <location>
        <position position="150"/>
    </location>
</feature>
<feature type="modified residue" description="S-nitrosocysteine; in reversibly inhibited form" evidence="9 12 14">
    <location>
        <position position="150"/>
    </location>
</feature>
<feature type="modified residue" description="Phosphothreonine" evidence="1">
    <location>
        <position position="151"/>
    </location>
</feature>
<feature type="modified residue" description="Deamidated asparagine" evidence="1">
    <location>
        <position position="153"/>
    </location>
</feature>
<feature type="modified residue" description="Phosphothreonine" evidence="1">
    <location>
        <position position="175"/>
    </location>
</feature>
<feature type="modified residue" description="Phosphothreonine" evidence="1">
    <location>
        <position position="180"/>
    </location>
</feature>
<feature type="modified residue" description="Phosphothreonine" evidence="1">
    <location>
        <position position="182"/>
    </location>
</feature>
<feature type="modified residue" description="N6,N6-dimethyllysine; alternate" evidence="1">
    <location>
        <position position="192"/>
    </location>
</feature>
<feature type="modified residue" description="N6-acetyllysine; alternate" evidence="1">
    <location>
        <position position="192"/>
    </location>
</feature>
<feature type="modified residue" description="N6-malonyllysine; alternate" evidence="1">
    <location>
        <position position="192"/>
    </location>
</feature>
<feature type="modified residue" description="Phosphothreonine" evidence="1">
    <location>
        <position position="209"/>
    </location>
</feature>
<feature type="modified residue" description="N6,N6-dimethyllysine; alternate" evidence="1">
    <location>
        <position position="213"/>
    </location>
</feature>
<feature type="modified residue" description="N6-malonyllysine; alternate" evidence="1">
    <location>
        <position position="213"/>
    </location>
</feature>
<feature type="modified residue" description="N6-acetyllysine" evidence="1">
    <location>
        <position position="217"/>
    </location>
</feature>
<feature type="modified residue" description="Deamidated asparagine" evidence="1">
    <location>
        <position position="223"/>
    </location>
</feature>
<feature type="modified residue" description="N6,N6-dimethyllysine; alternate" evidence="1">
    <location>
        <position position="225"/>
    </location>
</feature>
<feature type="modified residue" description="N6-acetyllysine; alternate" evidence="1">
    <location>
        <position position="225"/>
    </location>
</feature>
<feature type="modified residue" description="Phosphothreonine" evidence="1">
    <location>
        <position position="227"/>
    </location>
</feature>
<feature type="modified residue" description="Phosphothreonine" evidence="1">
    <location>
        <position position="235"/>
    </location>
</feature>
<feature type="modified residue" description="Phosphoserine" evidence="1">
    <location>
        <position position="239"/>
    </location>
</feature>
<feature type="modified residue" description="S-(2-succinyl)cysteine" evidence="10">
    <location>
        <position position="245"/>
    </location>
</feature>
<feature type="modified residue" description="S-nitrosocysteine" evidence="1">
    <location>
        <position position="245"/>
    </location>
</feature>
<feature type="modified residue" description="N6-acetyllysine" evidence="1">
    <location>
        <position position="252"/>
    </location>
</feature>
<feature type="modified residue" description="N6,N6-dimethyllysine" evidence="1">
    <location>
        <position position="258"/>
    </location>
</feature>
<feature type="modified residue" description="N6,N6-dimethyllysine" evidence="1">
    <location>
        <position position="261"/>
    </location>
</feature>
<feature type="modified residue" description="Phosphoserine" evidence="1">
    <location>
        <position position="310"/>
    </location>
</feature>
<feature type="modified residue" description="Deamidated asparagine" evidence="1">
    <location>
        <position position="314"/>
    </location>
</feature>
<feature type="modified residue" description="Phosphoserine" evidence="1">
    <location>
        <position position="331"/>
    </location>
</feature>
<feature type="modified residue" description="N6,N6-dimethyllysine" evidence="1">
    <location>
        <position position="332"/>
    </location>
</feature>
<feature type="cross-link" description="Glycyl lysine isopeptide (Lys-Gly) (interchain with G-Cter in SUMO2)" evidence="1">
    <location>
        <position position="184"/>
    </location>
</feature>
<feature type="mutagenesis site" description="Does not affect interaction with SIRT1." evidence="12">
    <original>S</original>
    <variation>A</variation>
    <location>
        <position position="149"/>
    </location>
</feature>
<feature type="mutagenesis site" description="Abolishes S-nitrosylation and subsequent nuclear translocation." evidence="9 12">
    <original>C</original>
    <variation>S</variation>
    <location>
        <position position="150"/>
    </location>
</feature>
<feature type="mutagenesis site" description="Does not affect interaction with SIRT1." evidence="12">
    <original>T</original>
    <variation>A</variation>
    <location>
        <position position="151"/>
    </location>
</feature>
<feature type="mutagenesis site" description="Abolishes interaction and subsequent nitrosylation of SIRT1." evidence="12">
    <original>T</original>
    <variation>A</variation>
    <location>
        <position position="152"/>
    </location>
</feature>
<feature type="mutagenesis site" description="Abolishes interaction with SIAH1." evidence="9">
    <original>K</original>
    <variation>A</variation>
    <location>
        <position position="225"/>
    </location>
</feature>
<feature type="mutagenesis site" description="Does not affect interaction with SIAH1." evidence="9">
    <original>P</original>
    <variation>A</variation>
    <location>
        <position position="234"/>
    </location>
</feature>
<feature type="mutagenesis site" description="Does not affect interaction with SIAH1." evidence="9">
    <original>T</original>
    <variation>A</variation>
    <location>
        <position position="235"/>
    </location>
</feature>
<feature type="sequence conflict" description="In Ref. 1; AAA41193." evidence="15" ref="1">
    <original>AN</original>
    <variation>VK</variation>
    <location>
        <begin position="81"/>
        <end position="82"/>
    </location>
</feature>
<feature type="sequence conflict" description="In Ref. 5; AAH87743." evidence="15" ref="5">
    <original>F</original>
    <variation>L</variation>
    <location>
        <position position="129"/>
    </location>
</feature>
<feature type="sequence conflict" description="In Ref. 1; AAA41193 and 8; CAA26150." evidence="15" ref="1 8">
    <original>F</original>
    <variation>I</variation>
    <location>
        <position position="305"/>
    </location>
</feature>
<keyword id="KW-0007">Acetylation</keyword>
<keyword id="KW-0013">ADP-ribosylation</keyword>
<keyword id="KW-0053">Apoptosis</keyword>
<keyword id="KW-0963">Cytoplasm</keyword>
<keyword id="KW-0206">Cytoskeleton</keyword>
<keyword id="KW-0903">Direct protein sequencing</keyword>
<keyword id="KW-0324">Glycolysis</keyword>
<keyword id="KW-0391">Immunity</keyword>
<keyword id="KW-0399">Innate immunity</keyword>
<keyword id="KW-1017">Isopeptide bond</keyword>
<keyword id="KW-0488">Methylation</keyword>
<keyword id="KW-0520">NAD</keyword>
<keyword id="KW-0539">Nucleus</keyword>
<keyword id="KW-0560">Oxidoreductase</keyword>
<keyword id="KW-0597">Phosphoprotein</keyword>
<keyword id="KW-1185">Reference proteome</keyword>
<keyword id="KW-0702">S-nitrosylation</keyword>
<keyword id="KW-0808">Transferase</keyword>
<keyword id="KW-0810">Translation regulation</keyword>
<keyword id="KW-0832">Ubl conjugation</keyword>
<gene>
    <name type="primary">Gapdh</name>
    <name type="synonym">Gapd</name>
</gene>
<protein>
    <recommendedName>
        <fullName>Glyceraldehyde-3-phosphate dehydrogenase</fullName>
        <shortName>GAPDH</shortName>
        <ecNumber evidence="16">1.2.1.12</ecNumber>
    </recommendedName>
    <alternativeName>
        <fullName>38 kDa BFA-dependent ADP-ribosylation substrate</fullName>
    </alternativeName>
    <alternativeName>
        <fullName>BARS-38</fullName>
    </alternativeName>
    <alternativeName>
        <fullName evidence="15">Peptidyl-cysteine S-nitrosylase GAPDH</fullName>
        <ecNumber evidence="12">2.6.99.-</ecNumber>
    </alternativeName>
</protein>
<comment type="function">
    <text evidence="1 2 6 8 9 10 12">Has both glyceraldehyde-3-phosphate dehydrogenase and nitrosylase activities, thereby playing a role in glycolysis and nuclear functions, respectively (PubMed:15951807, PubMed:17934141, PubMed:20972425). Glyceraldehyde-3-phosphate dehydrogenase is a key enzyme in glycolysis that catalyzes the first step of the pathway by converting D-glyceraldehyde 3-phosphate (G3P) into 3-phospho-D-glyceroyl phosphate (PubMed:17934141). Modulates the organization and assembly of the cytoskeleton. Facilitates the CHP1-dependent microtubule and membrane associations through its ability to stimulate the binding of CHP1 to microtubules (PubMed:15312048). Component of the GAIT (gamma interferon-activated inhibitor of translation) complex which mediates interferon-gamma-induced transcript-selective translation inhibition in inflammation processes. Upon interferon-gamma treatment assembles into the GAIT complex which binds to stem loop-containing GAIT elements in the 3'-UTR of diverse inflammatory mRNAs (such as ceruplasmin) and suppresses their translation (By similarity). Also plays a role in innate immunity by promoting TNF-induced NF-kappa-B activation and type I interferon production, via interaction with TRAF2 and TRAF3, respectively (By similarity). Participates in nuclear events including transcription, RNA transport, DNA replication and apoptosis (PubMed:10424669, PubMed:15951807, PubMed:20972425). Nuclear functions are probably due to the nitrosylase activity that mediates cysteine S-nitrosylation of nuclear target proteins such as SIRT1, HDAC2 and PRKDC (PubMed:15951807, PubMed:20972425).</text>
</comment>
<comment type="catalytic activity">
    <reaction evidence="5 16">
        <text>D-glyceraldehyde 3-phosphate + phosphate + NAD(+) = (2R)-3-phospho-glyceroyl phosphate + NADH + H(+)</text>
        <dbReference type="Rhea" id="RHEA:10300"/>
        <dbReference type="ChEBI" id="CHEBI:15378"/>
        <dbReference type="ChEBI" id="CHEBI:43474"/>
        <dbReference type="ChEBI" id="CHEBI:57540"/>
        <dbReference type="ChEBI" id="CHEBI:57604"/>
        <dbReference type="ChEBI" id="CHEBI:57945"/>
        <dbReference type="ChEBI" id="CHEBI:59776"/>
        <dbReference type="EC" id="1.2.1.12"/>
    </reaction>
</comment>
<comment type="catalytic activity">
    <reaction evidence="12">
        <text>S-nitroso-L-cysteinyl-[GAPDH] + L-cysteinyl-[protein] = L-cysteinyl-[GAPDH] + S-nitroso-L-cysteinyl-[protein]</text>
        <dbReference type="Rhea" id="RHEA:66684"/>
        <dbReference type="Rhea" id="RHEA-COMP:10131"/>
        <dbReference type="Rhea" id="RHEA-COMP:17089"/>
        <dbReference type="Rhea" id="RHEA-COMP:17090"/>
        <dbReference type="Rhea" id="RHEA-COMP:17091"/>
        <dbReference type="ChEBI" id="CHEBI:29950"/>
        <dbReference type="ChEBI" id="CHEBI:149494"/>
    </reaction>
    <physiologicalReaction direction="left-to-right" evidence="12">
        <dbReference type="Rhea" id="RHEA:66685"/>
    </physiologicalReaction>
</comment>
<comment type="activity regulation">
    <text evidence="10">Glyceraldehyde-3-phosphate dehydrogenase activity is inhibited by fumarate, via the formation of S-(2-succinyl)cysteine residues.</text>
</comment>
<comment type="pathway">
    <text>Carbohydrate degradation; glycolysis; pyruvate from D-glyceraldehyde 3-phosphate: step 1/5.</text>
</comment>
<comment type="subunit">
    <text evidence="1 2 8 9 11">Homotetramer (By similarity). Interacts with TPPP; the interaction is direct (By similarity). Interacts (when S-nitrosylated) with SIAH1; leading to nuclear translocation (PubMed:15951807, PubMed:19607794). Interacts with RILPL1/GOSPEL, leading to prevent the interaction between GAPDH and SIAH1 and prevent nuclear translocation (PubMed:19607794). Interacts with CHP1; the interaction increases the binding of CHP1 with microtubules (PubMed:15312048). Associates with microtubules (PubMed:15312048). Interacts with EIF1AD, USP25, PRKCI and WARS1. Interacts with phosphorylated RPL13A; inhibited by oxidatively-modified low-densitity lipoprotein (LDL(ox)). Component of the GAIT complex. Interacts with FKBP6; leading to inhibit GAPDH catalytic activity. Interacts with TRAF2, promoting TRAF2 ubiquitination. Interacts with TRAF3, promoting TRAF3 ubiquitination (By similarity).</text>
</comment>
<comment type="interaction">
    <interactant intactId="EBI-349219">
        <id>P04797</id>
    </interactant>
    <interactant intactId="EBI-7204362">
        <id>P47196</id>
        <label>Akt1</label>
    </interactant>
    <organismsDiffer>false</organismsDiffer>
    <experiments>3</experiments>
</comment>
<comment type="interaction">
    <interactant intactId="EBI-349219">
        <id>P04797</id>
    </interactant>
    <interactant intactId="EBI-917838">
        <id>P61023</id>
        <label>Chp1</label>
    </interactant>
    <organismsDiffer>false</organismsDiffer>
    <experiments>3</experiments>
</comment>
<comment type="interaction">
    <interactant intactId="EBI-349219">
        <id>P04797</id>
    </interactant>
    <interactant intactId="EBI-7473061">
        <id>Q80Z30</id>
        <label>Ppm1e</label>
    </interactant>
    <organismsDiffer>false</organismsDiffer>
    <experiments>5</experiments>
</comment>
<comment type="interaction">
    <interactant intactId="EBI-349219">
        <id>P04797</id>
    </interactant>
    <interactant intactId="EBI-915426">
        <id>P19357</id>
        <label>Slc2a4</label>
    </interactant>
    <organismsDiffer>false</organismsDiffer>
    <experiments>2</experiments>
</comment>
<comment type="subcellular location">
    <subcellularLocation>
        <location evidence="8 9 11">Cytoplasm</location>
        <location evidence="8 9 11">Cytosol</location>
    </subcellularLocation>
    <subcellularLocation>
        <location evidence="8">Cytoplasm</location>
        <location evidence="8">Cytoskeleton</location>
    </subcellularLocation>
    <subcellularLocation>
        <location evidence="9 11 12">Nucleus</location>
    </subcellularLocation>
    <text evidence="8 9">Translocates to the nucleus following S-nitrosylation and interaction with SIAH1, which contains a nuclear localization signal (PubMed:15951807). Colocalizes with CHP1 to small punctate structures along the microtubules tracks (PubMed:15312048).</text>
</comment>
<comment type="tissue specificity">
    <text evidence="13">High levels in skeletal muscle and heart, low levels in liver, brain, and kidney.</text>
</comment>
<comment type="domain">
    <text evidence="1">The [IL]-x-C-x-x-[DE] motif is a proposed target motif for cysteine S-nitrosylation mediated by the iNOS-S100A8/A9 transnitrosylase complex.</text>
</comment>
<comment type="PTM">
    <text evidence="1 7 9 12 14">S-nitrosylation of Cys-150 leads to interaction with SIAH1, followed by translocation to the nucleus (PubMed:1281150, PubMed:15951807, PubMed:20972425, PubMed:8626764). The effect of S-nitrosylation on enzymatic activity is unclear: according to some authors, it inhibits enzymatic activity and increases endogenous ADP-ribosylation, inhibiting the enzyme in a non-reversible manner (PubMed:8626764). According to others, it does not affect glycolysis (PubMed:15951807). ADP-ribosylation is likely to be a pathophysiological event associated with inhibition of gluconeogenesis (PubMed:8626764). S-nitrosylation of Cys-245 is induced by interferon-gamma and LDL(ox) implicating the iNOS-S100A8/9 transnitrosylase complex and seems to prevent interaction with phosphorylated RPL13A and to interfere with GAIT complex activity (By similarity).</text>
</comment>
<comment type="PTM">
    <text evidence="1">ISGylated.</text>
</comment>
<comment type="PTM">
    <text evidence="3">Sulfhydration at Cys-150 increases catalytic activity.</text>
</comment>
<comment type="PTM">
    <text evidence="1">Oxidative stress can promote the formation of high molecular weight disulfide-linked GAPDH aggregates, through a process called nucleocytoplasmic coagulation.</text>
</comment>
<comment type="PTM">
    <text evidence="10">Succination of Cys-150 and Cys-245 by the Krebs cycle intermediate fumarate, which leads to S-(2-succinyl)cysteine residues, inhibits glyceraldehyde-3-phosphate dehydrogenase activity. Fumarate concentration as well as succination of cysteine residues in GAPDH is significantly increased in muscle of diabetic rats. It was proposed that the S-(2-succinyl)cysteine chemical modification may be a useful biomarker of mitochondrial and oxidative stress in diabetes and that succination of GAPDH and other thiol proteins by fumarate may contribute to the metabolic changes underlying the development of diabetes complications.</text>
</comment>
<comment type="similarity">
    <text evidence="15">Belongs to the glyceraldehyde-3-phosphate dehydrogenase family.</text>
</comment>
<reference key="1">
    <citation type="journal article" date="1985" name="Nucleic Acids Res.">
        <title>Various rat adult tissues express only one major mRNA species from the glyceraldehyde-3-phosphate-dehydrogenase multigenic family.</title>
        <authorList>
            <person name="Fort P."/>
            <person name="Marty L."/>
            <person name="Piechaczyk M."/>
            <person name="el Sabrouty S."/>
            <person name="Dani C."/>
            <person name="Jeanteur P."/>
            <person name="Blanchard J.-M."/>
        </authorList>
    </citation>
    <scope>NUCLEOTIDE SEQUENCE [MRNA]</scope>
    <source>
        <strain>Wistar</strain>
        <tissue>Muscle</tissue>
    </source>
</reference>
<reference key="2">
    <citation type="journal article" date="1985" name="Nucleic Acids Res.">
        <title>Isolation and characterization of rat and human glyceraldehyde-3-phosphate dehydrogenase cDNAs: genomic complexity and molecular evolution of the gene.</title>
        <authorList>
            <person name="Tso J.Y."/>
            <person name="Sun X.-H."/>
            <person name="Kao T.-H."/>
            <person name="Reece K.S."/>
            <person name="Wu R."/>
        </authorList>
    </citation>
    <scope>NUCLEOTIDE SEQUENCE [MRNA]</scope>
    <source>
        <tissue>Liver</tissue>
    </source>
</reference>
<reference key="3">
    <citation type="journal article" date="1999" name="NeuroReport">
        <title>Over-expression of GAPDH induces apoptosis in COS-7 cells transfected with cloned GAPDH cDNAs.</title>
        <authorList>
            <person name="Tajima H."/>
            <person name="Tsuchiya K."/>
            <person name="Yamada M."/>
            <person name="Kondo K."/>
            <person name="Katsube N."/>
            <person name="Ishitani R."/>
        </authorList>
    </citation>
    <scope>NUCLEOTIDE SEQUENCE [MRNA]</scope>
    <scope>FUNCTION</scope>
    <source>
        <strain>Sprague-Dawley</strain>
        <tissue>Cerebellum</tissue>
    </source>
</reference>
<reference key="4">
    <citation type="submission" date="2000-09" db="EMBL/GenBank/DDBJ databases">
        <title>Isolation of a glyceraldehyde-3-phosphate dehydrogenase (GAPDH) cDNA isoform from rat brain by a rapid PCR-based cloning method and its expression by RT-PCR.</title>
        <authorList>
            <person name="Zheng J."/>
            <person name="Ramirez V.D."/>
        </authorList>
    </citation>
    <scope>NUCLEOTIDE SEQUENCE [MRNA]</scope>
    <source>
        <strain>Sprague-Dawley</strain>
        <tissue>Brain</tissue>
    </source>
</reference>
<reference key="5">
    <citation type="journal article" date="2004" name="Genome Res.">
        <title>The status, quality, and expansion of the NIH full-length cDNA project: the Mammalian Gene Collection (MGC).</title>
        <authorList>
            <consortium name="The MGC Project Team"/>
        </authorList>
    </citation>
    <scope>NUCLEOTIDE SEQUENCE [LARGE SCALE MRNA]</scope>
    <source>
        <tissue>Brain</tissue>
        <tissue>Pituitary anterior lobe</tissue>
    </source>
</reference>
<reference key="6">
    <citation type="submission" date="2007-04" db="UniProtKB">
        <authorList>
            <person name="Lubec G."/>
            <person name="Afjehi-Sadat L."/>
            <person name="Chen W.-Q."/>
        </authorList>
    </citation>
    <scope>PROTEIN SEQUENCE OF 65-105; 116-137; 144-184; 233-246 AND 308-321</scope>
    <scope>IDENTIFICATION BY MASS SPECTROMETRY</scope>
    <source>
        <strain>Sprague-Dawley</strain>
        <tissue>Hippocampus</tissue>
        <tissue>Spinal cord</tissue>
    </source>
</reference>
<reference key="7">
    <citation type="journal article" date="1987" name="J. Neurochem.">
        <title>Trifluoperazine activates and releases latent ATP-generating enzymes associated with the synaptic plasma membrane.</title>
        <authorList>
            <person name="Leung T.K.C."/>
            <person name="Hall C."/>
            <person name="Monfries C."/>
            <person name="Lim L."/>
        </authorList>
    </citation>
    <scope>NUCLEOTIDE SEQUENCE [MRNA] OF 235-333</scope>
    <source>
        <tissue>Brain</tissue>
    </source>
</reference>
<reference key="8">
    <citation type="journal article" date="1984" name="Nucleic Acids Res.">
        <title>Post-transcriptional regulation of glyceraldehyde-3-phosphate-dehydrogenase gene expression in rat tissues.</title>
        <authorList>
            <person name="Piechaczyk M."/>
            <person name="Blanchard J.-M."/>
            <person name="Marty L."/>
            <person name="Dani C."/>
            <person name="Panabieres F."/>
            <person name="el Sabrouty S."/>
            <person name="Fort P."/>
            <person name="Jeanteur P."/>
        </authorList>
    </citation>
    <scope>NUCLEOTIDE SEQUENCE [MRNA] OF 261-323</scope>
    <scope>TISSUE SPECIFICITY</scope>
    <source>
        <tissue>Glial tumor</tissue>
    </source>
</reference>
<reference key="9">
    <citation type="journal article" date="1985" name="Biochem. Biophys. Res. Commun.">
        <title>1.5 kb mRNA abundantly expressed in rat tumors encodes a 37 kilodalton protein in vitro.</title>
        <authorList>
            <person name="Maehara Y."/>
            <person name="Fujiyoshi T."/>
            <person name="Takahashi K."/>
            <person name="Yamamoto M."/>
            <person name="Endo H."/>
        </authorList>
    </citation>
    <scope>NUCLEOTIDE SEQUENCE [MRNA] OF 267-333</scope>
</reference>
<reference key="10">
    <citation type="journal article" date="1992" name="J. Biol. Chem.">
        <title>Nitric oxide-induced S-nitrosylation of glyceraldehyde-3-phosphate dehydrogenase inhibits enzymatic activity and increases endogenous ADP-ribosylation.</title>
        <authorList>
            <person name="Molina y Vedia L."/>
            <person name="McDonald B."/>
            <person name="Reep B."/>
            <person name="Brune B."/>
            <person name="Di Silvio M."/>
            <person name="Billiar T.R."/>
            <person name="Lapetina E.G."/>
        </authorList>
    </citation>
    <scope>S-NITROSYLATION</scope>
</reference>
<reference key="11">
    <citation type="journal article" date="1996" name="J. Biol. Chem.">
        <title>Posttranslational modification of glyceraldehyde-3-phosphate dehydrogenase by S-nitrosylation and subsequent NADH attachment.</title>
        <authorList>
            <person name="Mohr S."/>
            <person name="Stamler J.S."/>
            <person name="Brune B."/>
        </authorList>
    </citation>
    <scope>S-NITROSYLATION AT CYS-150</scope>
    <scope>ADP-RIBOSYLATION AT CYS-150</scope>
    <scope>LACK OF S-NITROSYLATION AT CYS-154</scope>
    <scope>ACTIVE SITE</scope>
</reference>
<reference key="12">
    <citation type="journal article" date="2004" name="Biochem. J.">
        <title>Interactions among p22, glyceraldehyde-3-phosphate dehydrogenase and microtubules.</title>
        <authorList>
            <person name="Andrade J."/>
            <person name="Pearce S.T."/>
            <person name="Zhao H."/>
            <person name="Barroso M."/>
        </authorList>
    </citation>
    <scope>FUNCTION</scope>
    <scope>INTERACTION WITH CHP1</scope>
    <scope>ASSOCIATION WITH MICROTUBULES</scope>
    <scope>SUBCELLULAR LOCATION</scope>
</reference>
<reference key="13">
    <citation type="journal article" date="2005" name="Nat. Cell Biol.">
        <title>S-nitrosylated GAPDH initiates apoptotic cell death by nuclear translocation following Siah1 binding.</title>
        <authorList>
            <person name="Hara M.R."/>
            <person name="Agrawal N."/>
            <person name="Kim S.F."/>
            <person name="Cascio M.B."/>
            <person name="Fujimuro M."/>
            <person name="Ozeki Y."/>
            <person name="Takahashi M."/>
            <person name="Cheah J.H."/>
            <person name="Tankou S.K."/>
            <person name="Hester L.D."/>
            <person name="Ferris C.D."/>
            <person name="Hayward S.D."/>
            <person name="Snyder S.H."/>
            <person name="Sawa A."/>
        </authorList>
    </citation>
    <scope>FUNCTION</scope>
    <scope>SUBCELLULAR LOCATION</scope>
    <scope>INTERACTION WITH SIAH1</scope>
    <scope>S-NITROSYLATION AT CYS-150</scope>
    <scope>MUTAGENESIS OF CYS-150; LYS-225; PRO-234 AND THR-235</scope>
</reference>
<reference key="14">
    <citation type="journal article" date="2008" name="Diabetes">
        <title>Inactivation of glyceraldehyde-3-phosphate dehydrogenase by fumarate in diabetes: formation of S-(2-succinyl)cysteine, a novel chemical modification of protein and possible biomarker of mitochondrial stress.</title>
        <authorList>
            <person name="Blatnik M."/>
            <person name="Frizzell N."/>
            <person name="Thorpe S.R."/>
            <person name="Baynes J.W."/>
        </authorList>
    </citation>
    <scope>SUCCINATION AT CYS-150 AND CYS-245</scope>
    <scope>FUNCTION</scope>
    <scope>ACTIVITY REGULATION</scope>
</reference>
<reference key="15">
    <citation type="journal article" date="2009" name="Neuron">
        <title>GOSPEL: a neuroprotective protein that binds to GAPDH upon S-nitrosylation.</title>
        <authorList>
            <person name="Sen N."/>
            <person name="Hara M.R."/>
            <person name="Ahmad A.S."/>
            <person name="Cascio M.B."/>
            <person name="Kamiya A."/>
            <person name="Ehmsen J.T."/>
            <person name="Agrawal N."/>
            <person name="Hester L."/>
            <person name="Dore S."/>
            <person name="Snyder S.H."/>
            <person name="Sawa A."/>
        </authorList>
    </citation>
    <scope>SUBCELLULAR LOCATION</scope>
    <scope>INTERACTION WITH RILPL1 AND SIAH1</scope>
</reference>
<reference key="16">
    <citation type="journal article" date="2010" name="Nat. Cell Biol.">
        <title>GAPDH mediates nitrosylation of nuclear proteins.</title>
        <authorList>
            <person name="Kornberg M.D."/>
            <person name="Sen N."/>
            <person name="Hara M.R."/>
            <person name="Juluri K.R."/>
            <person name="Nguyen J.V."/>
            <person name="Snowman A.M."/>
            <person name="Law L."/>
            <person name="Hester L.D."/>
            <person name="Snyder S.H."/>
        </authorList>
    </citation>
    <scope>FUNCTION AS NITROSYLASE</scope>
    <scope>CATALYTIC ACTIVITY</scope>
    <scope>SUBCELLULAR LOCATION</scope>
    <scope>S-NITROSYLATION AT CYS-150</scope>
    <scope>MUTAGENESIS OF SER-149; CYS-150; THR-151 AND THR-152</scope>
</reference>
<accession>P04797</accession>
<accession>P09328</accession>
<accession>Q5M916</accession>
<accession>Q9QWU4</accession>
<dbReference type="EC" id="1.2.1.12" evidence="16"/>
<dbReference type="EC" id="2.6.99.-" evidence="12"/>
<dbReference type="EMBL" id="X02231">
    <property type="protein sequence ID" value="CAA26150.1"/>
    <property type="molecule type" value="mRNA"/>
</dbReference>
<dbReference type="EMBL" id="M17701">
    <property type="protein sequence ID" value="AAA41193.1"/>
    <property type="molecule type" value="mRNA"/>
</dbReference>
<dbReference type="EMBL" id="AB017801">
    <property type="protein sequence ID" value="BAB11748.1"/>
    <property type="molecule type" value="mRNA"/>
</dbReference>
<dbReference type="EMBL" id="AF106860">
    <property type="protein sequence ID" value="AAD08929.2"/>
    <property type="molecule type" value="mRNA"/>
</dbReference>
<dbReference type="EMBL" id="BC059110">
    <property type="protein sequence ID" value="AAH59110.1"/>
    <property type="molecule type" value="mRNA"/>
</dbReference>
<dbReference type="EMBL" id="BC087743">
    <property type="protein sequence ID" value="AAH87743.1"/>
    <property type="molecule type" value="mRNA"/>
</dbReference>
<dbReference type="EMBL" id="M29341">
    <property type="protein sequence ID" value="AAA40814.1"/>
    <property type="molecule type" value="mRNA"/>
</dbReference>
<dbReference type="EMBL" id="M11561">
    <property type="protein sequence ID" value="AAA41795.1"/>
    <property type="molecule type" value="mRNA"/>
</dbReference>
<dbReference type="PIR" id="A23013">
    <property type="entry name" value="DERTG"/>
</dbReference>
<dbReference type="RefSeq" id="NP_058704.1">
    <property type="nucleotide sequence ID" value="NM_017008.4"/>
</dbReference>
<dbReference type="RefSeq" id="XP_017447924.1">
    <property type="nucleotide sequence ID" value="XM_017592435.1"/>
</dbReference>
<dbReference type="RefSeq" id="XP_017458425.1">
    <property type="nucleotide sequence ID" value="XM_017602936.1"/>
</dbReference>
<dbReference type="RefSeq" id="XP_038962936.1">
    <property type="nucleotide sequence ID" value="XM_039107008.2"/>
</dbReference>
<dbReference type="SMR" id="P04797"/>
<dbReference type="BioGRID" id="246554">
    <property type="interactions" value="14"/>
</dbReference>
<dbReference type="CORUM" id="P04797"/>
<dbReference type="FunCoup" id="P04797">
    <property type="interactions" value="1260"/>
</dbReference>
<dbReference type="IntAct" id="P04797">
    <property type="interactions" value="10"/>
</dbReference>
<dbReference type="MINT" id="P04797"/>
<dbReference type="STRING" id="10116.ENSRNOP00000040878"/>
<dbReference type="ChEMBL" id="CHEMBL2176832"/>
<dbReference type="MoonProt" id="P04797"/>
<dbReference type="GlyGen" id="P04797">
    <property type="glycosylation" value="1 site, 1 O-linked glycan (1 site)"/>
</dbReference>
<dbReference type="iPTMnet" id="P04797"/>
<dbReference type="PhosphoSitePlus" id="P04797"/>
<dbReference type="jPOST" id="P04797"/>
<dbReference type="PaxDb" id="10116-ENSRNOP00000040878"/>
<dbReference type="GeneID" id="24383"/>
<dbReference type="KEGG" id="rno:24383"/>
<dbReference type="UCSC" id="RGD:2661">
    <property type="organism name" value="rat"/>
</dbReference>
<dbReference type="AGR" id="RGD:2661"/>
<dbReference type="CTD" id="2597"/>
<dbReference type="RGD" id="2661">
    <property type="gene designation" value="Gapdh"/>
</dbReference>
<dbReference type="VEuPathDB" id="HostDB:ENSRNOG00000018630"/>
<dbReference type="eggNOG" id="KOG0657">
    <property type="taxonomic scope" value="Eukaryota"/>
</dbReference>
<dbReference type="HOGENOM" id="CLU_030140_0_1_1"/>
<dbReference type="InParanoid" id="P04797"/>
<dbReference type="OrthoDB" id="9553738at2759"/>
<dbReference type="PhylomeDB" id="P04797"/>
<dbReference type="TreeFam" id="TF300533"/>
<dbReference type="BRENDA" id="1.2.1.12">
    <property type="organism ID" value="5301"/>
</dbReference>
<dbReference type="Reactome" id="R-RNO-70171">
    <property type="pathway name" value="Glycolysis"/>
</dbReference>
<dbReference type="Reactome" id="R-RNO-70263">
    <property type="pathway name" value="Gluconeogenesis"/>
</dbReference>
<dbReference type="SABIO-RK" id="P04797"/>
<dbReference type="UniPathway" id="UPA00109">
    <property type="reaction ID" value="UER00184"/>
</dbReference>
<dbReference type="PRO" id="PR:P04797"/>
<dbReference type="Proteomes" id="UP000002494">
    <property type="component" value="Chromosome 4"/>
</dbReference>
<dbReference type="Bgee" id="ENSRNOG00000018630">
    <property type="expression patterns" value="Expressed in skeletal muscle tissue and 18 other cell types or tissues"/>
</dbReference>
<dbReference type="GO" id="GO:0005737">
    <property type="term" value="C:cytoplasm"/>
    <property type="evidence" value="ECO:0000314"/>
    <property type="project" value="UniProtKB"/>
</dbReference>
<dbReference type="GO" id="GO:0005829">
    <property type="term" value="C:cytosol"/>
    <property type="evidence" value="ECO:0000314"/>
    <property type="project" value="UniProtKB"/>
</dbReference>
<dbReference type="GO" id="GO:0097452">
    <property type="term" value="C:GAIT complex"/>
    <property type="evidence" value="ECO:0000250"/>
    <property type="project" value="UniProtKB"/>
</dbReference>
<dbReference type="GO" id="GO:0098978">
    <property type="term" value="C:glutamatergic synapse"/>
    <property type="evidence" value="ECO:0000314"/>
    <property type="project" value="SynGO"/>
</dbReference>
<dbReference type="GO" id="GO:0005811">
    <property type="term" value="C:lipid droplet"/>
    <property type="evidence" value="ECO:0000266"/>
    <property type="project" value="RGD"/>
</dbReference>
<dbReference type="GO" id="GO:0015630">
    <property type="term" value="C:microtubule cytoskeleton"/>
    <property type="evidence" value="ECO:0000314"/>
    <property type="project" value="UniProtKB"/>
</dbReference>
<dbReference type="GO" id="GO:0005634">
    <property type="term" value="C:nucleus"/>
    <property type="evidence" value="ECO:0000314"/>
    <property type="project" value="UniProtKB"/>
</dbReference>
<dbReference type="GO" id="GO:0005886">
    <property type="term" value="C:plasma membrane"/>
    <property type="evidence" value="ECO:0000266"/>
    <property type="project" value="RGD"/>
</dbReference>
<dbReference type="GO" id="GO:0099092">
    <property type="term" value="C:postsynaptic density, intracellular component"/>
    <property type="evidence" value="ECO:0000314"/>
    <property type="project" value="SynGO"/>
</dbReference>
<dbReference type="GO" id="GO:1990904">
    <property type="term" value="C:ribonucleoprotein complex"/>
    <property type="evidence" value="ECO:0000266"/>
    <property type="project" value="RGD"/>
</dbReference>
<dbReference type="GO" id="GO:0019828">
    <property type="term" value="F:aspartic-type endopeptidase inhibitor activity"/>
    <property type="evidence" value="ECO:0000266"/>
    <property type="project" value="RGD"/>
</dbReference>
<dbReference type="GO" id="GO:0097718">
    <property type="term" value="F:disordered domain specific binding"/>
    <property type="evidence" value="ECO:0000266"/>
    <property type="project" value="RGD"/>
</dbReference>
<dbReference type="GO" id="GO:0019899">
    <property type="term" value="F:enzyme binding"/>
    <property type="evidence" value="ECO:0000266"/>
    <property type="project" value="RGD"/>
</dbReference>
<dbReference type="GO" id="GO:0004365">
    <property type="term" value="F:glyceraldehyde-3-phosphate dehydrogenase (NAD+) (phosphorylating) activity"/>
    <property type="evidence" value="ECO:0000314"/>
    <property type="project" value="UniProtKB"/>
</dbReference>
<dbReference type="GO" id="GO:0042802">
    <property type="term" value="F:identical protein binding"/>
    <property type="evidence" value="ECO:0000353"/>
    <property type="project" value="RGD"/>
</dbReference>
<dbReference type="GO" id="GO:0008017">
    <property type="term" value="F:microtubule binding"/>
    <property type="evidence" value="ECO:0000314"/>
    <property type="project" value="UniProtKB"/>
</dbReference>
<dbReference type="GO" id="GO:0051287">
    <property type="term" value="F:NAD binding"/>
    <property type="evidence" value="ECO:0007669"/>
    <property type="project" value="InterPro"/>
</dbReference>
<dbReference type="GO" id="GO:0050661">
    <property type="term" value="F:NADP binding"/>
    <property type="evidence" value="ECO:0007669"/>
    <property type="project" value="InterPro"/>
</dbReference>
<dbReference type="GO" id="GO:0035605">
    <property type="term" value="F:peptidyl-cysteine S-nitrosylase activity"/>
    <property type="evidence" value="ECO:0000314"/>
    <property type="project" value="UniProtKB"/>
</dbReference>
<dbReference type="GO" id="GO:0061844">
    <property type="term" value="P:antimicrobial humoral immune response mediated by antimicrobial peptide"/>
    <property type="evidence" value="ECO:0000266"/>
    <property type="project" value="RGD"/>
</dbReference>
<dbReference type="GO" id="GO:0141156">
    <property type="term" value="P:cAMP/PKA signal transduction"/>
    <property type="evidence" value="ECO:0000315"/>
    <property type="project" value="RGD"/>
</dbReference>
<dbReference type="GO" id="GO:0061621">
    <property type="term" value="P:canonical glycolysis"/>
    <property type="evidence" value="ECO:0000266"/>
    <property type="project" value="RGD"/>
</dbReference>
<dbReference type="GO" id="GO:0071346">
    <property type="term" value="P:cellular response to type II interferon"/>
    <property type="evidence" value="ECO:0000266"/>
    <property type="project" value="RGD"/>
</dbReference>
<dbReference type="GO" id="GO:0007565">
    <property type="term" value="P:female pregnancy"/>
    <property type="evidence" value="ECO:0000270"/>
    <property type="project" value="RGD"/>
</dbReference>
<dbReference type="GO" id="GO:0006094">
    <property type="term" value="P:gluconeogenesis"/>
    <property type="evidence" value="ECO:0000314"/>
    <property type="project" value="RGD"/>
</dbReference>
<dbReference type="GO" id="GO:0006096">
    <property type="term" value="P:glycolytic process"/>
    <property type="evidence" value="ECO:0000315"/>
    <property type="project" value="RGD"/>
</dbReference>
<dbReference type="GO" id="GO:0000226">
    <property type="term" value="P:microtubule cytoskeleton organization"/>
    <property type="evidence" value="ECO:0000314"/>
    <property type="project" value="UniProtKB"/>
</dbReference>
<dbReference type="GO" id="GO:0017148">
    <property type="term" value="P:negative regulation of translation"/>
    <property type="evidence" value="ECO:0000266"/>
    <property type="project" value="RGD"/>
</dbReference>
<dbReference type="GO" id="GO:1905460">
    <property type="term" value="P:negative regulation of vascular associated smooth muscle cell apoptotic process"/>
    <property type="evidence" value="ECO:0000315"/>
    <property type="project" value="RGD"/>
</dbReference>
<dbReference type="GO" id="GO:0051402">
    <property type="term" value="P:neuron apoptotic process"/>
    <property type="evidence" value="ECO:0000315"/>
    <property type="project" value="UniProtKB"/>
</dbReference>
<dbReference type="GO" id="GO:0007263">
    <property type="term" value="P:nitric oxide mediated signal transduction"/>
    <property type="evidence" value="ECO:0000314"/>
    <property type="project" value="UniProtKB"/>
</dbReference>
<dbReference type="GO" id="GO:0035606">
    <property type="term" value="P:peptidyl-cysteine S-trans-nitrosylation"/>
    <property type="evidence" value="ECO:0000314"/>
    <property type="project" value="UniProtKB"/>
</dbReference>
<dbReference type="GO" id="GO:0043123">
    <property type="term" value="P:positive regulation of canonical NF-kappaB signal transduction"/>
    <property type="evidence" value="ECO:0000250"/>
    <property type="project" value="UniProtKB"/>
</dbReference>
<dbReference type="GO" id="GO:0001819">
    <property type="term" value="P:positive regulation of cytokine production"/>
    <property type="evidence" value="ECO:0000266"/>
    <property type="project" value="RGD"/>
</dbReference>
<dbReference type="GO" id="GO:0032481">
    <property type="term" value="P:positive regulation of type I interferon production"/>
    <property type="evidence" value="ECO:0000250"/>
    <property type="project" value="UniProtKB"/>
</dbReference>
<dbReference type="GO" id="GO:0050821">
    <property type="term" value="P:protein stabilization"/>
    <property type="evidence" value="ECO:0000314"/>
    <property type="project" value="UniProtKB"/>
</dbReference>
<dbReference type="GO" id="GO:0045471">
    <property type="term" value="P:response to ethanol"/>
    <property type="evidence" value="ECO:0000270"/>
    <property type="project" value="RGD"/>
</dbReference>
<dbReference type="CDD" id="cd18126">
    <property type="entry name" value="GAPDH_I_C"/>
    <property type="match status" value="1"/>
</dbReference>
<dbReference type="CDD" id="cd05214">
    <property type="entry name" value="GAPDH_I_N"/>
    <property type="match status" value="1"/>
</dbReference>
<dbReference type="FunFam" id="3.30.360.10:FF:000001">
    <property type="entry name" value="Glyceraldehyde-3-phosphate dehydrogenase"/>
    <property type="match status" value="1"/>
</dbReference>
<dbReference type="FunFam" id="3.40.50.720:FF:001161">
    <property type="entry name" value="Glyceraldehyde-3-phosphate dehydrogenase"/>
    <property type="match status" value="1"/>
</dbReference>
<dbReference type="FunFam" id="3.40.50.720:FF:000636">
    <property type="entry name" value="Glyceraldehyde-3-phosphate dehydrogenase 2, cytosolic"/>
    <property type="match status" value="1"/>
</dbReference>
<dbReference type="Gene3D" id="3.30.360.10">
    <property type="entry name" value="Dihydrodipicolinate Reductase, domain 2"/>
    <property type="match status" value="1"/>
</dbReference>
<dbReference type="Gene3D" id="3.40.50.720">
    <property type="entry name" value="NAD(P)-binding Rossmann-like Domain"/>
    <property type="match status" value="1"/>
</dbReference>
<dbReference type="InterPro" id="IPR020831">
    <property type="entry name" value="GlycerAld/Erythrose_P_DH"/>
</dbReference>
<dbReference type="InterPro" id="IPR020830">
    <property type="entry name" value="GlycerAld_3-P_DH_AS"/>
</dbReference>
<dbReference type="InterPro" id="IPR020829">
    <property type="entry name" value="GlycerAld_3-P_DH_cat"/>
</dbReference>
<dbReference type="InterPro" id="IPR020828">
    <property type="entry name" value="GlycerAld_3-P_DH_NAD(P)-bd"/>
</dbReference>
<dbReference type="InterPro" id="IPR006424">
    <property type="entry name" value="Glyceraldehyde-3-P_DH_1"/>
</dbReference>
<dbReference type="InterPro" id="IPR036291">
    <property type="entry name" value="NAD(P)-bd_dom_sf"/>
</dbReference>
<dbReference type="NCBIfam" id="TIGR01534">
    <property type="entry name" value="GAPDH-I"/>
    <property type="match status" value="1"/>
</dbReference>
<dbReference type="PANTHER" id="PTHR10836">
    <property type="entry name" value="GLYCERALDEHYDE 3-PHOSPHATE DEHYDROGENASE"/>
    <property type="match status" value="1"/>
</dbReference>
<dbReference type="PANTHER" id="PTHR10836:SF111">
    <property type="entry name" value="GLYCERALDEHYDE-3-PHOSPHATE DEHYDROGENASE"/>
    <property type="match status" value="1"/>
</dbReference>
<dbReference type="Pfam" id="PF02800">
    <property type="entry name" value="Gp_dh_C"/>
    <property type="match status" value="1"/>
</dbReference>
<dbReference type="Pfam" id="PF00044">
    <property type="entry name" value="Gp_dh_N"/>
    <property type="match status" value="1"/>
</dbReference>
<dbReference type="PIRSF" id="PIRSF000149">
    <property type="entry name" value="GAP_DH"/>
    <property type="match status" value="1"/>
</dbReference>
<dbReference type="PRINTS" id="PR00078">
    <property type="entry name" value="G3PDHDRGNASE"/>
</dbReference>
<dbReference type="SMART" id="SM00846">
    <property type="entry name" value="Gp_dh_N"/>
    <property type="match status" value="1"/>
</dbReference>
<dbReference type="SUPFAM" id="SSF55347">
    <property type="entry name" value="Glyceraldehyde-3-phosphate dehydrogenase-like, C-terminal domain"/>
    <property type="match status" value="1"/>
</dbReference>
<dbReference type="SUPFAM" id="SSF51735">
    <property type="entry name" value="NAD(P)-binding Rossmann-fold domains"/>
    <property type="match status" value="1"/>
</dbReference>
<dbReference type="PROSITE" id="PS00071">
    <property type="entry name" value="GAPDH"/>
    <property type="match status" value="1"/>
</dbReference>
<organism>
    <name type="scientific">Rattus norvegicus</name>
    <name type="common">Rat</name>
    <dbReference type="NCBI Taxonomy" id="10116"/>
    <lineage>
        <taxon>Eukaryota</taxon>
        <taxon>Metazoa</taxon>
        <taxon>Chordata</taxon>
        <taxon>Craniata</taxon>
        <taxon>Vertebrata</taxon>
        <taxon>Euteleostomi</taxon>
        <taxon>Mammalia</taxon>
        <taxon>Eutheria</taxon>
        <taxon>Euarchontoglires</taxon>
        <taxon>Glires</taxon>
        <taxon>Rodentia</taxon>
        <taxon>Myomorpha</taxon>
        <taxon>Muroidea</taxon>
        <taxon>Muridae</taxon>
        <taxon>Murinae</taxon>
        <taxon>Rattus</taxon>
    </lineage>
</organism>
<evidence type="ECO:0000250" key="1">
    <source>
        <dbReference type="UniProtKB" id="P04406"/>
    </source>
</evidence>
<evidence type="ECO:0000250" key="2">
    <source>
        <dbReference type="UniProtKB" id="P10096"/>
    </source>
</evidence>
<evidence type="ECO:0000250" key="3">
    <source>
        <dbReference type="UniProtKB" id="P16858"/>
    </source>
</evidence>
<evidence type="ECO:0000250" key="4">
    <source>
        <dbReference type="UniProtKB" id="P22513"/>
    </source>
</evidence>
<evidence type="ECO:0000255" key="5">
    <source>
        <dbReference type="PROSITE-ProRule" id="PRU10009"/>
    </source>
</evidence>
<evidence type="ECO:0000269" key="6">
    <source>
    </source>
</evidence>
<evidence type="ECO:0000269" key="7">
    <source>
    </source>
</evidence>
<evidence type="ECO:0000269" key="8">
    <source>
    </source>
</evidence>
<evidence type="ECO:0000269" key="9">
    <source>
    </source>
</evidence>
<evidence type="ECO:0000269" key="10">
    <source>
    </source>
</evidence>
<evidence type="ECO:0000269" key="11">
    <source>
    </source>
</evidence>
<evidence type="ECO:0000269" key="12">
    <source>
    </source>
</evidence>
<evidence type="ECO:0000269" key="13">
    <source>
    </source>
</evidence>
<evidence type="ECO:0000269" key="14">
    <source>
    </source>
</evidence>
<evidence type="ECO:0000305" key="15"/>
<evidence type="ECO:0000305" key="16">
    <source>
    </source>
</evidence>
<name>G3P_RAT</name>
<proteinExistence type="evidence at protein level"/>
<sequence>MVKVGVNGFGRIGRLVTRAAFSCDKVDIVAINDPFIDLNYMVYMFQYDSTHGKFNGTVKAENGKLVINGKPITIFQERDPANIKWGDAGAEYVVESTGVFTTMEKAGAHLKGGAKRVIISAPSADAPMFVMGVNHEKYDNSLKIVSNASCTTNCLAPLAKVIHDNFGIVEGLMTTVHAITATQKTVDGPSGKLWRDGRGAAQNIIPASTGAAKAVGKVIPELNGKLTGMAFRVPTPNVSVVDLTCRLEKPAKYDDIKKVVKQAAEGPLKGILGYTEDQVVSCDFNSNSHSSTFDAGAGIALNDNFVKLISWYDNEYGYSNRVVDLMAYMASKE</sequence>